<comment type="function">
    <text evidence="1">Probable mitochondrial mRNA stabilization factor.</text>
</comment>
<comment type="subcellular location">
    <subcellularLocation>
        <location evidence="1">Mitochondrion inner membrane</location>
        <topology evidence="1">Peripheral membrane protein</topology>
        <orientation evidence="1">Matrix side</orientation>
    </subcellularLocation>
</comment>
<comment type="similarity">
    <text evidence="4">Belongs to the ATP25 family.</text>
</comment>
<organism>
    <name type="scientific">Zygosaccharomyces rouxii (strain ATCC 2623 / CBS 732 / NBRC 1130 / NCYC 568 / NRRL Y-229)</name>
    <dbReference type="NCBI Taxonomy" id="559307"/>
    <lineage>
        <taxon>Eukaryota</taxon>
        <taxon>Fungi</taxon>
        <taxon>Dikarya</taxon>
        <taxon>Ascomycota</taxon>
        <taxon>Saccharomycotina</taxon>
        <taxon>Saccharomycetes</taxon>
        <taxon>Saccharomycetales</taxon>
        <taxon>Saccharomycetaceae</taxon>
        <taxon>Zygosaccharomyces</taxon>
    </lineage>
</organism>
<feature type="transit peptide" description="Mitochondrion" evidence="2">
    <location>
        <begin position="1"/>
        <end position="29"/>
    </location>
</feature>
<feature type="chain" id="PRO_0000404497" description="ATPase synthesis protein 25, mitochondrial">
    <location>
        <begin position="30"/>
        <end position="583"/>
    </location>
</feature>
<feature type="region of interest" description="Disordered" evidence="3">
    <location>
        <begin position="163"/>
        <end position="183"/>
    </location>
</feature>
<feature type="compositionally biased region" description="Basic residues" evidence="3">
    <location>
        <begin position="165"/>
        <end position="174"/>
    </location>
</feature>
<gene>
    <name type="primary">ATP25</name>
    <name type="ordered locus">ZYRO0G02948g</name>
</gene>
<name>ATP25_ZYGRC</name>
<evidence type="ECO:0000250" key="1"/>
<evidence type="ECO:0000255" key="2"/>
<evidence type="ECO:0000256" key="3">
    <source>
        <dbReference type="SAM" id="MobiDB-lite"/>
    </source>
</evidence>
<evidence type="ECO:0000305" key="4"/>
<reference key="1">
    <citation type="journal article" date="2009" name="Genome Res.">
        <title>Comparative genomics of protoploid Saccharomycetaceae.</title>
        <authorList>
            <consortium name="The Genolevures Consortium"/>
            <person name="Souciet J.-L."/>
            <person name="Dujon B."/>
            <person name="Gaillardin C."/>
            <person name="Johnston M."/>
            <person name="Baret P.V."/>
            <person name="Cliften P."/>
            <person name="Sherman D.J."/>
            <person name="Weissenbach J."/>
            <person name="Westhof E."/>
            <person name="Wincker P."/>
            <person name="Jubin C."/>
            <person name="Poulain J."/>
            <person name="Barbe V."/>
            <person name="Segurens B."/>
            <person name="Artiguenave F."/>
            <person name="Anthouard V."/>
            <person name="Vacherie B."/>
            <person name="Val M.-E."/>
            <person name="Fulton R.S."/>
            <person name="Minx P."/>
            <person name="Wilson R."/>
            <person name="Durrens P."/>
            <person name="Jean G."/>
            <person name="Marck C."/>
            <person name="Martin T."/>
            <person name="Nikolski M."/>
            <person name="Rolland T."/>
            <person name="Seret M.-L."/>
            <person name="Casaregola S."/>
            <person name="Despons L."/>
            <person name="Fairhead C."/>
            <person name="Fischer G."/>
            <person name="Lafontaine I."/>
            <person name="Leh V."/>
            <person name="Lemaire M."/>
            <person name="de Montigny J."/>
            <person name="Neuveglise C."/>
            <person name="Thierry A."/>
            <person name="Blanc-Lenfle I."/>
            <person name="Bleykasten C."/>
            <person name="Diffels J."/>
            <person name="Fritsch E."/>
            <person name="Frangeul L."/>
            <person name="Goeffon A."/>
            <person name="Jauniaux N."/>
            <person name="Kachouri-Lafond R."/>
            <person name="Payen C."/>
            <person name="Potier S."/>
            <person name="Pribylova L."/>
            <person name="Ozanne C."/>
            <person name="Richard G.-F."/>
            <person name="Sacerdot C."/>
            <person name="Straub M.-L."/>
            <person name="Talla E."/>
        </authorList>
    </citation>
    <scope>NUCLEOTIDE SEQUENCE [LARGE SCALE GENOMIC DNA]</scope>
    <source>
        <strain>ATCC 2623 / CBS 732 / BCRC 21506 / NBRC 1130 / NCYC 568 / NRRL Y-229</strain>
    </source>
</reference>
<sequence length="583" mass="67259">MLRISRALRGSRTVGLVRARSVLSSNSTSLRYFSRLPTCYQEKTNNSTTTIPWYLKVGDRERALKQSIFKAQEINYPSNSPDSLRHISQYLCDELGLSDIIIFDLRKGEFETAAAKISDFMVIATARSPKHCQTSFDKLNSLIKQEYESVAYVEGQFNAREEKKRQRRLARKPKLSSNSTSNVPTESWFLIDCKVDKIFVNILTENRRQEINLEELYAPEHERHKYERKESSVEGREAPQEDDILAGLRRLVNQRRQYSTVAPSVVLCRQLLANLESSDFNGAISLINNNREYSLNFMKTIHDWVSGLEIDAAKEIPWKKWVTTFESCWPLVLPEESASLYWSLRMNFFKMINIADKEHYNINQFFNDYLLAKKSLGYPITSQDLIEFFKLTIINVRGDGEKSRGYWEIVNRNALVSRALRLVEDVKDGNSIVQDGTLVSMLLRTMVSGEEEVPNHMLHATYEVIDYLVDTFGAAMDPTAIGGVLEVLAAARSWNKYMAFWEAGVGGLVPGEDHRPWSQFIKLVVDSGDSEMIRKLLSEGHLLWLKRFEVKMTDDIKEQLDRLFEKGYSQGLWFEELKEHIYV</sequence>
<dbReference type="EMBL" id="CU928179">
    <property type="protein sequence ID" value="CAR29196.1"/>
    <property type="molecule type" value="Genomic_DNA"/>
</dbReference>
<dbReference type="RefSeq" id="XP_002498129.1">
    <property type="nucleotide sequence ID" value="XM_002498084.1"/>
</dbReference>
<dbReference type="SMR" id="C5DZB2"/>
<dbReference type="FunCoup" id="C5DZB2">
    <property type="interactions" value="92"/>
</dbReference>
<dbReference type="STRING" id="559307.C5DZB2"/>
<dbReference type="GeneID" id="8205918"/>
<dbReference type="KEGG" id="zro:ZYRO0G02948g"/>
<dbReference type="HOGENOM" id="CLU_487522_0_0_1"/>
<dbReference type="InParanoid" id="C5DZB2"/>
<dbReference type="Proteomes" id="UP000008536">
    <property type="component" value="Chromosome G"/>
</dbReference>
<dbReference type="GO" id="GO:0005743">
    <property type="term" value="C:mitochondrial inner membrane"/>
    <property type="evidence" value="ECO:0007669"/>
    <property type="project" value="UniProtKB-SubCell"/>
</dbReference>
<dbReference type="GO" id="GO:0140053">
    <property type="term" value="P:mitochondrial gene expression"/>
    <property type="evidence" value="ECO:0007669"/>
    <property type="project" value="InterPro"/>
</dbReference>
<dbReference type="GO" id="GO:0048255">
    <property type="term" value="P:mRNA stabilization"/>
    <property type="evidence" value="ECO:0007669"/>
    <property type="project" value="InterPro"/>
</dbReference>
<dbReference type="Gene3D" id="3.30.460.10">
    <property type="entry name" value="Beta Polymerase, domain 2"/>
    <property type="match status" value="1"/>
</dbReference>
<dbReference type="InterPro" id="IPR040152">
    <property type="entry name" value="Atp25"/>
</dbReference>
<dbReference type="InterPro" id="IPR025210">
    <property type="entry name" value="ATP25_mRNA_stabil_dom"/>
</dbReference>
<dbReference type="InterPro" id="IPR043519">
    <property type="entry name" value="NT_sf"/>
</dbReference>
<dbReference type="PANTHER" id="PTHR28087">
    <property type="entry name" value="ATPASE SYNTHESIS PROTEIN 25, MITOCHONDRIAL"/>
    <property type="match status" value="1"/>
</dbReference>
<dbReference type="PANTHER" id="PTHR28087:SF1">
    <property type="entry name" value="ATPASE SYNTHESIS PROTEIN 25, MITOCHONDRIAL"/>
    <property type="match status" value="1"/>
</dbReference>
<dbReference type="Pfam" id="PF13929">
    <property type="entry name" value="mRNA_stabil"/>
    <property type="match status" value="1"/>
</dbReference>
<dbReference type="Pfam" id="PF02410">
    <property type="entry name" value="RsfS"/>
    <property type="match status" value="1"/>
</dbReference>
<dbReference type="SUPFAM" id="SSF81301">
    <property type="entry name" value="Nucleotidyltransferase"/>
    <property type="match status" value="1"/>
</dbReference>
<keyword id="KW-0472">Membrane</keyword>
<keyword id="KW-0496">Mitochondrion</keyword>
<keyword id="KW-0999">Mitochondrion inner membrane</keyword>
<keyword id="KW-1185">Reference proteome</keyword>
<keyword id="KW-0809">Transit peptide</keyword>
<protein>
    <recommendedName>
        <fullName>ATPase synthesis protein 25, mitochondrial</fullName>
    </recommendedName>
</protein>
<accession>C5DZB2</accession>
<proteinExistence type="inferred from homology"/>